<keyword id="KW-0903">Direct protein sequencing</keyword>
<keyword id="KW-0256">Endoplasmic reticulum</keyword>
<keyword id="KW-0325">Glycoprotein</keyword>
<keyword id="KW-0443">Lipid metabolism</keyword>
<keyword id="KW-0472">Membrane</keyword>
<keyword id="KW-0492">Microsome</keyword>
<keyword id="KW-0521">NADP</keyword>
<keyword id="KW-0560">Oxidoreductase</keyword>
<keyword id="KW-1185">Reference proteome</keyword>
<keyword id="KW-0735">Signal-anchor</keyword>
<keyword id="KW-0753">Steroid metabolism</keyword>
<keyword id="KW-0812">Transmembrane</keyword>
<keyword id="KW-1133">Transmembrane helix</keyword>
<accession>Q7M3I4</accession>
<evidence type="ECO:0000250" key="1"/>
<evidence type="ECO:0000250" key="2">
    <source>
        <dbReference type="UniProtKB" id="P28845"/>
    </source>
</evidence>
<evidence type="ECO:0000250" key="3">
    <source>
        <dbReference type="UniProtKB" id="P50172"/>
    </source>
</evidence>
<evidence type="ECO:0000255" key="4"/>
<evidence type="ECO:0000255" key="5">
    <source>
        <dbReference type="PROSITE-ProRule" id="PRU10001"/>
    </source>
</evidence>
<evidence type="ECO:0000269" key="6">
    <source>
    </source>
</evidence>
<evidence type="ECO:0000269" key="7">
    <source>
    </source>
</evidence>
<evidence type="ECO:0000303" key="8">
    <source>
    </source>
</evidence>
<evidence type="ECO:0000303" key="9">
    <source>
    </source>
</evidence>
<evidence type="ECO:0000305" key="10"/>
<evidence type="ECO:0000305" key="11">
    <source>
    </source>
</evidence>
<evidence type="ECO:0000305" key="12">
    <source>
    </source>
</evidence>
<evidence type="ECO:0000312" key="13">
    <source>
        <dbReference type="PIR" id="A55573"/>
    </source>
</evidence>
<sequence>MAFMKKYLLPLLGLFLAYYYYSANEEFRPEMLQGKKVIVTGASKGIGKEIAFHLAKMGAHVVVTARSKETLQEVVAHCLKLGAASAHYIAGTMEDMTFAEQFVAKAGKLMGGLDMLILNHITNASLMFFNNDIHHVRKEMEVNFLSYVVLTVAALPMLKQSNGSIVVVSSLAGKIAHPLIAPYSASKFALDGFFSAIRKEHALTNVNVSITLCVLGLIDTDTAMKEVSGKIDMKAAPKEECALEIIKGGALRQDEVYYGNLQWTPLLLGNPGKRLIEFLHLRKFDISKLVNN</sequence>
<comment type="function">
    <text evidence="2 3 6 7">Controls the reversible conversion of biologically active glucocorticoids such as cortisone to cortisol, and 11-dehydrocorticosterone to corticosterone in the presence of NADP(H) (PubMed:19456256, PubMed:7836463). Participates in the corticosteroid receptor-mediated anti-inflammatory response, as well as metabolic and homeostatic processes (By similarity). Plays a role in the secretion of aqueous humor in the eye, maintaining a normotensive, intraocular environment (By similarity). Bidirectional in vitro, predominantly functions as a reductase in vivo, thereby increasing the concentration of active glucocorticoids (By similarity). It has broad substrate specificity, besides glucocorticoids, it accepts other steroid and sterol substrates. It has broad substrate specificity, besides glucocorticoids, it accepts other steroid and sterol substrates. Interconverts 7-oxo- and 7-hydroxy-neurosteroids such as 7-oxopregnenolone and 7beta-hydroxypregnenolone, 7-oxodehydroepiandrosterone (3beta-hydroxy-5-androstene-7,17-dione) and 7beta-hydroxydehydroepiandrosterone (3beta,7beta-dihydroxyandrost-5-en-17-one), among others (By similarity). Catalyzes the stereo-specific conversion of the major dietary oxysterol, 7-ketocholesterol (7-oxocholesterol), into the more polar 7-beta-hydroxycholesterol metabolite (By similarity). 7-oxocholesterol is one of the most important oxysterols, it participates in several events such as induction of apoptosis, accumulation in atherosclerotic lesions, lipid peroxidation, and induction of foam cell formation (By similarity). Mediates the 7-oxo reduction of 7-oxolithocholate mainly to chenodeoxycholate, and to a lesser extent to ursodeoxycholate, both in its free form and when conjugated to glycine or taurine, providing a link between glucocorticoid activation and bile acid metabolism (By similarity). Catalyzes the synthesis of 7-beta-25-dihydroxycholesterol from 7-oxo-25-hydroxycholesterol in vitro, which acts as a ligand for the G-protein-coupled receptor (GPCR) Epstein-Barr virus-induced gene 2 (EBI2) and may thereby regulate immune cell migration (By similarity).</text>
</comment>
<comment type="catalytic activity">
    <reaction evidence="6 7">
        <text>an 11beta-hydroxysteroid + NADP(+) = an 11-oxosteroid + NADPH + H(+)</text>
        <dbReference type="Rhea" id="RHEA:11388"/>
        <dbReference type="ChEBI" id="CHEBI:15378"/>
        <dbReference type="ChEBI" id="CHEBI:35346"/>
        <dbReference type="ChEBI" id="CHEBI:47787"/>
        <dbReference type="ChEBI" id="CHEBI:57783"/>
        <dbReference type="ChEBI" id="CHEBI:58349"/>
        <dbReference type="EC" id="1.1.1.146"/>
    </reaction>
    <physiologicalReaction direction="left-to-right" evidence="11 12">
        <dbReference type="Rhea" id="RHEA:11389"/>
    </physiologicalReaction>
    <physiologicalReaction direction="right-to-left" evidence="6 7">
        <dbReference type="Rhea" id="RHEA:11390"/>
    </physiologicalReaction>
</comment>
<comment type="catalytic activity">
    <reaction evidence="7">
        <text>corticosterone + NADP(+) = 11-dehydrocorticosterone + NADPH + H(+)</text>
        <dbReference type="Rhea" id="RHEA:42200"/>
        <dbReference type="ChEBI" id="CHEBI:15378"/>
        <dbReference type="ChEBI" id="CHEBI:16827"/>
        <dbReference type="ChEBI" id="CHEBI:57783"/>
        <dbReference type="ChEBI" id="CHEBI:58349"/>
        <dbReference type="ChEBI" id="CHEBI:78600"/>
    </reaction>
    <physiologicalReaction direction="left-to-right" evidence="7">
        <dbReference type="Rhea" id="RHEA:42201"/>
    </physiologicalReaction>
    <physiologicalReaction direction="right-to-left" evidence="12">
        <dbReference type="Rhea" id="RHEA:42202"/>
    </physiologicalReaction>
</comment>
<comment type="catalytic activity">
    <reaction evidence="6">
        <text>cortisone + NADPH + H(+) = cortisol + NADP(+)</text>
        <dbReference type="Rhea" id="RHEA:68616"/>
        <dbReference type="ChEBI" id="CHEBI:15378"/>
        <dbReference type="ChEBI" id="CHEBI:16962"/>
        <dbReference type="ChEBI" id="CHEBI:17650"/>
        <dbReference type="ChEBI" id="CHEBI:57783"/>
        <dbReference type="ChEBI" id="CHEBI:58349"/>
    </reaction>
    <physiologicalReaction direction="left-to-right" evidence="6">
        <dbReference type="Rhea" id="RHEA:68617"/>
    </physiologicalReaction>
    <physiologicalReaction direction="right-to-left" evidence="11">
        <dbReference type="Rhea" id="RHEA:68618"/>
    </physiologicalReaction>
</comment>
<comment type="catalytic activity">
    <reaction evidence="2">
        <text>a 7beta-hydroxysteroid + NADP(+) = a 7-oxosteroid + NADPH + H(+)</text>
        <dbReference type="Rhea" id="RHEA:20233"/>
        <dbReference type="ChEBI" id="CHEBI:15378"/>
        <dbReference type="ChEBI" id="CHEBI:35349"/>
        <dbReference type="ChEBI" id="CHEBI:47789"/>
        <dbReference type="ChEBI" id="CHEBI:57783"/>
        <dbReference type="ChEBI" id="CHEBI:58349"/>
        <dbReference type="EC" id="1.1.1.201"/>
    </reaction>
    <physiologicalReaction direction="right-to-left" evidence="2">
        <dbReference type="Rhea" id="RHEA:20235"/>
    </physiologicalReaction>
</comment>
<comment type="catalytic activity">
    <reaction evidence="2">
        <text>7-oxocholesterol + NADPH + H(+) = 7beta-hydroxycholesterol + NADP(+)</text>
        <dbReference type="Rhea" id="RHEA:68656"/>
        <dbReference type="ChEBI" id="CHEBI:15378"/>
        <dbReference type="ChEBI" id="CHEBI:42989"/>
        <dbReference type="ChEBI" id="CHEBI:57783"/>
        <dbReference type="ChEBI" id="CHEBI:58349"/>
        <dbReference type="ChEBI" id="CHEBI:64294"/>
    </reaction>
    <physiologicalReaction direction="left-to-right" evidence="2">
        <dbReference type="Rhea" id="RHEA:68657"/>
    </physiologicalReaction>
</comment>
<comment type="catalytic activity">
    <reaction evidence="2">
        <text>chenodeoxycholate + NADP(+) = 7-oxolithocholate + NADPH + H(+)</text>
        <dbReference type="Rhea" id="RHEA:53820"/>
        <dbReference type="ChEBI" id="CHEBI:15378"/>
        <dbReference type="ChEBI" id="CHEBI:36234"/>
        <dbReference type="ChEBI" id="CHEBI:57783"/>
        <dbReference type="ChEBI" id="CHEBI:58349"/>
        <dbReference type="ChEBI" id="CHEBI:78605"/>
    </reaction>
    <physiologicalReaction direction="right-to-left" evidence="2">
        <dbReference type="Rhea" id="RHEA:53822"/>
    </physiologicalReaction>
</comment>
<comment type="catalytic activity">
    <reaction evidence="2">
        <text>7-oxolithocholate + NADPH + H(+) = ursodeoxycholate + NADP(+)</text>
        <dbReference type="Rhea" id="RHEA:47540"/>
        <dbReference type="ChEBI" id="CHEBI:15378"/>
        <dbReference type="ChEBI" id="CHEBI:57783"/>
        <dbReference type="ChEBI" id="CHEBI:58349"/>
        <dbReference type="ChEBI" id="CHEBI:78604"/>
        <dbReference type="ChEBI" id="CHEBI:78605"/>
    </reaction>
    <physiologicalReaction direction="left-to-right" evidence="2">
        <dbReference type="Rhea" id="RHEA:47541"/>
    </physiologicalReaction>
</comment>
<comment type="catalytic activity">
    <reaction evidence="2">
        <text>glycochenodeoxycholate + NADP(+) = 7-oxoglycolithocholate + NADPH + H(+)</text>
        <dbReference type="Rhea" id="RHEA:65056"/>
        <dbReference type="ChEBI" id="CHEBI:15378"/>
        <dbReference type="ChEBI" id="CHEBI:36252"/>
        <dbReference type="ChEBI" id="CHEBI:57783"/>
        <dbReference type="ChEBI" id="CHEBI:58349"/>
        <dbReference type="ChEBI" id="CHEBI:137818"/>
    </reaction>
    <physiologicalReaction direction="right-to-left" evidence="2">
        <dbReference type="Rhea" id="RHEA:65058"/>
    </physiologicalReaction>
</comment>
<comment type="catalytic activity">
    <reaction evidence="2">
        <text>taurochenodeoxycholate + NADP(+) = 7-oxotaurolithocholate + NADPH + H(+)</text>
        <dbReference type="Rhea" id="RHEA:65060"/>
        <dbReference type="ChEBI" id="CHEBI:9407"/>
        <dbReference type="ChEBI" id="CHEBI:15378"/>
        <dbReference type="ChEBI" id="CHEBI:57783"/>
        <dbReference type="ChEBI" id="CHEBI:58349"/>
        <dbReference type="ChEBI" id="CHEBI:137724"/>
    </reaction>
    <physiologicalReaction direction="right-to-left" evidence="2">
        <dbReference type="Rhea" id="RHEA:65062"/>
    </physiologicalReaction>
</comment>
<comment type="catalytic activity">
    <reaction evidence="2">
        <text>tauroursodeoxycholate + NADP(+) = 7-oxotaurolithocholate + NADPH + H(+)</text>
        <dbReference type="Rhea" id="RHEA:68980"/>
        <dbReference type="ChEBI" id="CHEBI:15378"/>
        <dbReference type="ChEBI" id="CHEBI:57783"/>
        <dbReference type="ChEBI" id="CHEBI:58349"/>
        <dbReference type="ChEBI" id="CHEBI:132028"/>
        <dbReference type="ChEBI" id="CHEBI:137724"/>
    </reaction>
    <physiologicalReaction direction="right-to-left" evidence="2">
        <dbReference type="Rhea" id="RHEA:68982"/>
    </physiologicalReaction>
</comment>
<comment type="catalytic activity">
    <reaction evidence="2">
        <text>glycoursodeoxycholate + NADP(+) = 7-oxoglycolithocholate + NADPH + H(+)</text>
        <dbReference type="Rhea" id="RHEA:68976"/>
        <dbReference type="ChEBI" id="CHEBI:15378"/>
        <dbReference type="ChEBI" id="CHEBI:57783"/>
        <dbReference type="ChEBI" id="CHEBI:58349"/>
        <dbReference type="ChEBI" id="CHEBI:132030"/>
        <dbReference type="ChEBI" id="CHEBI:137818"/>
    </reaction>
    <physiologicalReaction direction="right-to-left" evidence="2">
        <dbReference type="Rhea" id="RHEA:68978"/>
    </physiologicalReaction>
</comment>
<comment type="catalytic activity">
    <reaction evidence="2">
        <text>7-oxopregnenolone + NADPH + H(+) = 7beta-hydroxypregnenolone + NADP(+)</text>
        <dbReference type="Rhea" id="RHEA:69436"/>
        <dbReference type="ChEBI" id="CHEBI:15378"/>
        <dbReference type="ChEBI" id="CHEBI:57783"/>
        <dbReference type="ChEBI" id="CHEBI:58349"/>
        <dbReference type="ChEBI" id="CHEBI:183806"/>
        <dbReference type="ChEBI" id="CHEBI:183807"/>
    </reaction>
    <physiologicalReaction direction="left-to-right" evidence="2">
        <dbReference type="Rhea" id="RHEA:69437"/>
    </physiologicalReaction>
</comment>
<comment type="catalytic activity">
    <reaction evidence="2">
        <text>3beta,7alpha-dihydroxyandrost-5-en-17-one + NADP(+) = 3beta-hydroxy-5-androstene-7,17-dione + NADPH + H(+)</text>
        <dbReference type="Rhea" id="RHEA:69440"/>
        <dbReference type="ChEBI" id="CHEBI:15378"/>
        <dbReference type="ChEBI" id="CHEBI:57783"/>
        <dbReference type="ChEBI" id="CHEBI:58349"/>
        <dbReference type="ChEBI" id="CHEBI:81471"/>
        <dbReference type="ChEBI" id="CHEBI:183808"/>
    </reaction>
    <physiologicalReaction direction="left-to-right" evidence="2">
        <dbReference type="Rhea" id="RHEA:69441"/>
    </physiologicalReaction>
</comment>
<comment type="catalytic activity">
    <reaction evidence="2">
        <text>3beta-hydroxy-5-androstene-7,17-dione + NADPH + H(+) = 3beta,7beta-dihydroxyandrost-5-en-17-one + NADP(+)</text>
        <dbReference type="Rhea" id="RHEA:69452"/>
        <dbReference type="ChEBI" id="CHEBI:15378"/>
        <dbReference type="ChEBI" id="CHEBI:57783"/>
        <dbReference type="ChEBI" id="CHEBI:58349"/>
        <dbReference type="ChEBI" id="CHEBI:183368"/>
        <dbReference type="ChEBI" id="CHEBI:183808"/>
    </reaction>
    <physiologicalReaction direction="left-to-right" evidence="2">
        <dbReference type="Rhea" id="RHEA:69453"/>
    </physiologicalReaction>
</comment>
<comment type="catalytic activity">
    <reaction evidence="2">
        <text>3beta-hydroxy-5alpha-androstane-7,17-dione + NADPH + H(+) = 3beta,7beta-dihydroxy-5alpha-androstan-17-one + NADP(+)</text>
        <dbReference type="Rhea" id="RHEA:69456"/>
        <dbReference type="ChEBI" id="CHEBI:15378"/>
        <dbReference type="ChEBI" id="CHEBI:57783"/>
        <dbReference type="ChEBI" id="CHEBI:58349"/>
        <dbReference type="ChEBI" id="CHEBI:79834"/>
        <dbReference type="ChEBI" id="CHEBI:183809"/>
    </reaction>
    <physiologicalReaction direction="left-to-right" evidence="2">
        <dbReference type="Rhea" id="RHEA:69457"/>
    </physiologicalReaction>
</comment>
<comment type="pathway">
    <text evidence="2">Steroid metabolism.</text>
</comment>
<comment type="subunit">
    <text evidence="2">Homodimer.</text>
</comment>
<comment type="subcellular location">
    <subcellularLocation>
        <location evidence="7">Endoplasmic reticulum membrane</location>
        <topology evidence="7">Single-pass type II membrane protein</topology>
    </subcellularLocation>
    <subcellularLocation>
        <location evidence="7">Microsome membrane</location>
        <topology evidence="7">Single-pass type II membrane protein</topology>
    </subcellularLocation>
</comment>
<comment type="tissue specificity">
    <text evidence="6">Expressed in the eye.</text>
</comment>
<comment type="PTM">
    <text evidence="7">Glycosylated.</text>
</comment>
<comment type="similarity">
    <text evidence="4">Belongs to the short-chain dehydrogenases/reductases (SDR) family.</text>
</comment>
<protein>
    <recommendedName>
        <fullName evidence="9">11-beta-hydroxysteroid dehydrogenase 1</fullName>
        <shortName evidence="9">11-DH</shortName>
        <shortName evidence="8">11-beta-HSD1</shortName>
        <ecNumber evidence="6 7">1.1.1.146</ecNumber>
    </recommendedName>
    <alternativeName>
        <fullName>7-oxosteroid reductase</fullName>
        <ecNumber evidence="2">1.1.1.201</ecNumber>
    </alternativeName>
    <alternativeName>
        <fullName>Corticosteroid 11-beta-dehydrogenase isozyme 1</fullName>
    </alternativeName>
</protein>
<feature type="initiator methionine" description="Removed" evidence="7">
    <location>
        <position position="1"/>
    </location>
</feature>
<feature type="chain" id="PRO_0000054622" description="11-beta-hydroxysteroid dehydrogenase 1">
    <location>
        <begin position="2"/>
        <end position="292"/>
    </location>
</feature>
<feature type="topological domain" description="Cytoplasmic" evidence="4">
    <location>
        <begin position="2"/>
        <end position="7"/>
    </location>
</feature>
<feature type="transmembrane region" description="Helical; Signal-anchor for type II membrane protein" evidence="4">
    <location>
        <begin position="8"/>
        <end position="24"/>
    </location>
</feature>
<feature type="topological domain" description="Lumenal" evidence="4">
    <location>
        <begin position="25"/>
        <end position="292"/>
    </location>
</feature>
<feature type="active site" description="Proton acceptor" evidence="5">
    <location>
        <position position="183"/>
    </location>
</feature>
<feature type="binding site">
    <location>
        <begin position="41"/>
        <end position="67"/>
    </location>
    <ligand>
        <name>NADP(+)</name>
        <dbReference type="ChEBI" id="CHEBI:58349"/>
    </ligand>
</feature>
<feature type="binding site">
    <location>
        <begin position="92"/>
        <end position="93"/>
    </location>
    <ligand>
        <name>NADP(+)</name>
        <dbReference type="ChEBI" id="CHEBI:58349"/>
    </ligand>
</feature>
<feature type="binding site">
    <location>
        <begin position="119"/>
        <end position="121"/>
    </location>
    <ligand>
        <name>NADP(+)</name>
        <dbReference type="ChEBI" id="CHEBI:58349"/>
    </ligand>
</feature>
<feature type="binding site" evidence="1">
    <location>
        <position position="170"/>
    </location>
    <ligand>
        <name>substrate</name>
    </ligand>
</feature>
<feature type="binding site">
    <location>
        <begin position="183"/>
        <end position="187"/>
    </location>
    <ligand>
        <name>NADP(+)</name>
        <dbReference type="ChEBI" id="CHEBI:58349"/>
    </ligand>
</feature>
<feature type="binding site" evidence="2">
    <location>
        <begin position="218"/>
        <end position="222"/>
    </location>
    <ligand>
        <name>NADP(+)</name>
        <dbReference type="ChEBI" id="CHEBI:58349"/>
    </ligand>
</feature>
<feature type="glycosylation site" description="N-linked (GlcNAc...) asparagine" evidence="12">
    <location>
        <position position="123"/>
    </location>
</feature>
<feature type="glycosylation site" description="N-linked (GlcNAc...) asparagine" evidence="12">
    <location>
        <position position="162"/>
    </location>
</feature>
<feature type="glycosylation site" description="N-linked (GlcNAc...) asparagine" evidence="12">
    <location>
        <position position="207"/>
    </location>
</feature>
<dbReference type="EC" id="1.1.1.146" evidence="6 7"/>
<dbReference type="EC" id="1.1.1.201" evidence="2"/>
<dbReference type="PIR" id="A55573">
    <property type="entry name" value="A55573"/>
</dbReference>
<dbReference type="SMR" id="Q7M3I4"/>
<dbReference type="FunCoup" id="Q7M3I4">
    <property type="interactions" value="40"/>
</dbReference>
<dbReference type="STRING" id="9986.ENSOCUP00000003489"/>
<dbReference type="GlyCosmos" id="Q7M3I4">
    <property type="glycosylation" value="3 sites, No reported glycans"/>
</dbReference>
<dbReference type="iPTMnet" id="Q7M3I4"/>
<dbReference type="PaxDb" id="9986-ENSOCUP00000003489"/>
<dbReference type="eggNOG" id="KOG1205">
    <property type="taxonomic scope" value="Eukaryota"/>
</dbReference>
<dbReference type="InParanoid" id="Q7M3I4"/>
<dbReference type="Proteomes" id="UP000001811">
    <property type="component" value="Unplaced"/>
</dbReference>
<dbReference type="GO" id="GO:0005789">
    <property type="term" value="C:endoplasmic reticulum membrane"/>
    <property type="evidence" value="ECO:0007669"/>
    <property type="project" value="UniProtKB-SubCell"/>
</dbReference>
<dbReference type="GO" id="GO:0070524">
    <property type="term" value="F:11-beta-hydroxysteroid dehydrogenase (NADP+) activity"/>
    <property type="evidence" value="ECO:0000314"/>
    <property type="project" value="GO_Central"/>
</dbReference>
<dbReference type="GO" id="GO:0047022">
    <property type="term" value="F:7-beta-hydroxysteroid dehydrogenase (NADP+) activity"/>
    <property type="evidence" value="ECO:0007669"/>
    <property type="project" value="RHEA"/>
</dbReference>
<dbReference type="GO" id="GO:0102196">
    <property type="term" value="F:cortisol dehydrogenase (NAD+) activity"/>
    <property type="evidence" value="ECO:0007669"/>
    <property type="project" value="RHEA"/>
</dbReference>
<dbReference type="GO" id="GO:0005496">
    <property type="term" value="F:steroid binding"/>
    <property type="evidence" value="ECO:0007669"/>
    <property type="project" value="TreeGrafter"/>
</dbReference>
<dbReference type="GO" id="GO:0006706">
    <property type="term" value="P:steroid catabolic process"/>
    <property type="evidence" value="ECO:0007669"/>
    <property type="project" value="TreeGrafter"/>
</dbReference>
<dbReference type="CDD" id="cd05332">
    <property type="entry name" value="11beta-HSD1_like_SDR_c"/>
    <property type="match status" value="1"/>
</dbReference>
<dbReference type="FunFam" id="3.40.50.720:FF:000329">
    <property type="entry name" value="Corticosteroid 11-beta-dehydrogenase isozyme 1"/>
    <property type="match status" value="1"/>
</dbReference>
<dbReference type="Gene3D" id="3.40.50.720">
    <property type="entry name" value="NAD(P)-binding Rossmann-like Domain"/>
    <property type="match status" value="1"/>
</dbReference>
<dbReference type="InterPro" id="IPR051253">
    <property type="entry name" value="11-beta-HSD"/>
</dbReference>
<dbReference type="InterPro" id="IPR036291">
    <property type="entry name" value="NAD(P)-bd_dom_sf"/>
</dbReference>
<dbReference type="InterPro" id="IPR020904">
    <property type="entry name" value="Sc_DH/Rdtase_CS"/>
</dbReference>
<dbReference type="InterPro" id="IPR002347">
    <property type="entry name" value="SDR_fam"/>
</dbReference>
<dbReference type="PANTHER" id="PTHR44279:SF1">
    <property type="entry name" value="11-BETA-HYDROXYSTEROID DEHYDROGENASE 1"/>
    <property type="match status" value="1"/>
</dbReference>
<dbReference type="PANTHER" id="PTHR44279">
    <property type="entry name" value="HYDROXYSTEROID (11-BETA) DEHYDROGENASE 1-LIKE B-RELATED"/>
    <property type="match status" value="1"/>
</dbReference>
<dbReference type="Pfam" id="PF00106">
    <property type="entry name" value="adh_short"/>
    <property type="match status" value="1"/>
</dbReference>
<dbReference type="PRINTS" id="PR00081">
    <property type="entry name" value="GDHRDH"/>
</dbReference>
<dbReference type="SUPFAM" id="SSF51735">
    <property type="entry name" value="NAD(P)-binding Rossmann-fold domains"/>
    <property type="match status" value="1"/>
</dbReference>
<dbReference type="PROSITE" id="PS00061">
    <property type="entry name" value="ADH_SHORT"/>
    <property type="match status" value="1"/>
</dbReference>
<reference evidence="10 13" key="1">
    <citation type="journal article" date="1995" name="J. Biol. Chem.">
        <title>Lumenal orientation and post-translational modifications of the liver microsomal 11beta-hydroxysteroid dehydrogenase.</title>
        <authorList>
            <person name="Ozols J."/>
        </authorList>
    </citation>
    <scope>PROTEIN SEQUENCE OF 2-292</scope>
    <scope>FUNCTION</scope>
    <scope>CATALYTIC ACTIVITY</scope>
    <scope>SUBCELLULAR LOCATION</scope>
    <scope>DISULFIDE BOND</scope>
    <scope>GLYCOSYLATION AT ASN-123; ASN-162 AND ASN-207</scope>
    <source>
        <strain evidence="7">New Zealand</strain>
        <tissue evidence="7">Liver</tissue>
    </source>
</reference>
<reference key="2">
    <citation type="journal article" date="2009" name="J. Ocul. Pharmacol. Ther.">
        <title>In vivo evaluation of 11beta-hydroxysteroid dehydrogenase activity in the rabbit eye.</title>
        <authorList>
            <person name="Anderson S."/>
            <person name="Carreiro S."/>
            <person name="Quenzer T."/>
            <person name="Gale D."/>
            <person name="Xiang C."/>
            <person name="Gukasyan H."/>
            <person name="Lafontaine J."/>
            <person name="Cheng H."/>
            <person name="Krauss A."/>
            <person name="Prasanna G."/>
        </authorList>
    </citation>
    <scope>FUNCTION</scope>
    <scope>CATALYTIC ACTIVITY</scope>
    <scope>TISSUE SPECIFICITY</scope>
</reference>
<organism>
    <name type="scientific">Oryctolagus cuniculus</name>
    <name type="common">Rabbit</name>
    <dbReference type="NCBI Taxonomy" id="9986"/>
    <lineage>
        <taxon>Eukaryota</taxon>
        <taxon>Metazoa</taxon>
        <taxon>Chordata</taxon>
        <taxon>Craniata</taxon>
        <taxon>Vertebrata</taxon>
        <taxon>Euteleostomi</taxon>
        <taxon>Mammalia</taxon>
        <taxon>Eutheria</taxon>
        <taxon>Euarchontoglires</taxon>
        <taxon>Glires</taxon>
        <taxon>Lagomorpha</taxon>
        <taxon>Leporidae</taxon>
        <taxon>Oryctolagus</taxon>
    </lineage>
</organism>
<name>DHI1_RABIT</name>
<gene>
    <name evidence="2" type="primary">HSD11B1</name>
</gene>
<proteinExistence type="evidence at protein level"/>